<name>FEOB_LEPIC</name>
<proteinExistence type="inferred from homology"/>
<reference key="1">
    <citation type="journal article" date="2004" name="J. Bacteriol.">
        <title>Comparative genomics of two Leptospira interrogans serovars reveals novel insights into physiology and pathogenesis.</title>
        <authorList>
            <person name="Nascimento A.L.T.O."/>
            <person name="Ko A.I."/>
            <person name="Martins E.A.L."/>
            <person name="Monteiro-Vitorello C.B."/>
            <person name="Ho P.L."/>
            <person name="Haake D.A."/>
            <person name="Verjovski-Almeida S."/>
            <person name="Hartskeerl R.A."/>
            <person name="Marques M.V."/>
            <person name="Oliveira M.C."/>
            <person name="Menck C.F.M."/>
            <person name="Leite L.C.C."/>
            <person name="Carrer H."/>
            <person name="Coutinho L.L."/>
            <person name="Degrave W.M."/>
            <person name="Dellagostin O.A."/>
            <person name="El-Dorry H."/>
            <person name="Ferro E.S."/>
            <person name="Ferro M.I.T."/>
            <person name="Furlan L.R."/>
            <person name="Gamberini M."/>
            <person name="Giglioti E.A."/>
            <person name="Goes-Neto A."/>
            <person name="Goldman G.H."/>
            <person name="Goldman M.H.S."/>
            <person name="Harakava R."/>
            <person name="Jeronimo S.M.B."/>
            <person name="Junqueira-de-Azevedo I.L.M."/>
            <person name="Kimura E.T."/>
            <person name="Kuramae E.E."/>
            <person name="Lemos E.G.M."/>
            <person name="Lemos M.V.F."/>
            <person name="Marino C.L."/>
            <person name="Nunes L.R."/>
            <person name="de Oliveira R.C."/>
            <person name="Pereira G.G."/>
            <person name="Reis M.S."/>
            <person name="Schriefer A."/>
            <person name="Siqueira W.J."/>
            <person name="Sommer P."/>
            <person name="Tsai S.M."/>
            <person name="Simpson A.J.G."/>
            <person name="Ferro J.A."/>
            <person name="Camargo L.E.A."/>
            <person name="Kitajima J.P."/>
            <person name="Setubal J.C."/>
            <person name="Van Sluys M.A."/>
        </authorList>
    </citation>
    <scope>NUCLEOTIDE SEQUENCE [LARGE SCALE GENOMIC DNA]</scope>
    <source>
        <strain>Fiocruz L1-130</strain>
    </source>
</reference>
<comment type="function">
    <text evidence="2">Probable transporter of a GTP-driven Fe(2+) uptake system.</text>
</comment>
<comment type="subcellular location">
    <subcellularLocation>
        <location evidence="1">Cell inner membrane</location>
        <topology evidence="1">Multi-pass membrane protein</topology>
    </subcellularLocation>
</comment>
<comment type="similarity">
    <text evidence="4">Belongs to the TRAFAC class TrmE-Era-EngA-EngB-Septin-like GTPase superfamily. FeoB GTPase (TC 9.A.8) family.</text>
</comment>
<feature type="chain" id="PRO_0000210837" description="Fe(2+) transporter FeoB">
    <location>
        <begin position="1"/>
        <end position="701"/>
    </location>
</feature>
<feature type="transmembrane region" description="Helical" evidence="3">
    <location>
        <begin position="292"/>
        <end position="312"/>
    </location>
</feature>
<feature type="transmembrane region" description="Helical" evidence="3">
    <location>
        <begin position="352"/>
        <end position="372"/>
    </location>
</feature>
<feature type="transmembrane region" description="Helical" evidence="3">
    <location>
        <begin position="394"/>
        <end position="414"/>
    </location>
</feature>
<feature type="transmembrane region" description="Helical" evidence="3">
    <location>
        <begin position="429"/>
        <end position="451"/>
    </location>
</feature>
<feature type="transmembrane region" description="Helical" evidence="3">
    <location>
        <begin position="466"/>
        <end position="486"/>
    </location>
</feature>
<feature type="transmembrane region" description="Helical" evidence="3">
    <location>
        <begin position="523"/>
        <end position="543"/>
    </location>
</feature>
<feature type="transmembrane region" description="Helical" evidence="3">
    <location>
        <begin position="645"/>
        <end position="665"/>
    </location>
</feature>
<feature type="transmembrane region" description="Helical" evidence="3">
    <location>
        <begin position="672"/>
        <end position="692"/>
    </location>
</feature>
<feature type="domain" description="FeoB-type G" evidence="4">
    <location>
        <begin position="9"/>
        <end position="172"/>
    </location>
</feature>
<feature type="binding site" evidence="4">
    <location>
        <begin position="16"/>
        <end position="23"/>
    </location>
    <ligand>
        <name>GTP</name>
        <dbReference type="ChEBI" id="CHEBI:37565"/>
    </ligand>
</feature>
<feature type="binding site" evidence="4">
    <location>
        <begin position="41"/>
        <end position="46"/>
    </location>
    <ligand>
        <name>GTP</name>
        <dbReference type="ChEBI" id="CHEBI:37565"/>
    </ligand>
</feature>
<feature type="binding site" evidence="4">
    <location>
        <begin position="62"/>
        <end position="65"/>
    </location>
    <ligand>
        <name>GTP</name>
        <dbReference type="ChEBI" id="CHEBI:37565"/>
    </ligand>
</feature>
<organism>
    <name type="scientific">Leptospira interrogans serogroup Icterohaemorrhagiae serovar copenhageni (strain Fiocruz L1-130)</name>
    <dbReference type="NCBI Taxonomy" id="267671"/>
    <lineage>
        <taxon>Bacteria</taxon>
        <taxon>Pseudomonadati</taxon>
        <taxon>Spirochaetota</taxon>
        <taxon>Spirochaetia</taxon>
        <taxon>Leptospirales</taxon>
        <taxon>Leptospiraceae</taxon>
        <taxon>Leptospira</taxon>
    </lineage>
</organism>
<evidence type="ECO:0000250" key="1">
    <source>
        <dbReference type="UniProtKB" id="P33650"/>
    </source>
</evidence>
<evidence type="ECO:0000250" key="2">
    <source>
        <dbReference type="UniProtKB" id="Q8GNS3"/>
    </source>
</evidence>
<evidence type="ECO:0000255" key="3"/>
<evidence type="ECO:0000255" key="4">
    <source>
        <dbReference type="PROSITE-ProRule" id="PRU01048"/>
    </source>
</evidence>
<evidence type="ECO:0000305" key="5"/>
<protein>
    <recommendedName>
        <fullName evidence="5">Fe(2+) transporter FeoB</fullName>
    </recommendedName>
    <alternativeName>
        <fullName>Ferrous iron transport protein B</fullName>
    </alternativeName>
</protein>
<gene>
    <name type="primary">feoB</name>
    <name type="ordered locus">LIC_11402</name>
</gene>
<sequence length="701" mass="78133">MGHSDSSKTFRILMAGNPNCGKSTLFNQLTGLRQKTGNYHGVTVEKAEGIFHHLDHSVKILDLPGAFSLGGSSEDKQITSRVLIGHEAGDRILFVMDASLAERSLQFLLQILELNVPVLVAVTMKDVLEKKRVQLRLDLLSNEFGILFQYVNPKNGEGIKELKDRIVSPKAFCLPIRSFPWDSERENFLNDLLNSLSTEHSNSLKFVLTNSLKELSGEILQKGLPGLSLFSETPSKLIREKFERFGKRFTYLEELTQKSIYIKKILSTAIVGDPIPNERVLSKADKILLHPFWGLVSFLGIMALVFQALFTWSEMPMDWIESCVRNVGTFVGDFLEEGPLRSLIQEGIIGGVGAVLVFIPQISLLFLFIGILEETGYIARASFVMDRFMGKFGLSGKSFIPLLSSAACAVPAIMGTRTIENKSDRLTTILVSPLITCSARYPVYVLVIGAIFPSKNILGIFNVQALTMFGLFLLGMIASMFAALVFKKTFFKSDSSYFLMELPAYNTPSIKSLALTVFKKLKAFLSTAGQIILFISILLWFLANYPRIDSSLYPNLTDAELKKIQIRESYAGHSGKFMEPVLKPIGFDWKMGIGIITSFAAREIMVSTLSIIYGVGGEESTDDLKEALLKDTDENGKPVWGLSNSVSLLLFFAFACQCMSTLAVVKKETNSIFWPLFLFTYMTILAYSTSFIVFQVWQLFS</sequence>
<dbReference type="EMBL" id="AE016823">
    <property type="protein sequence ID" value="AAS70002.1"/>
    <property type="molecule type" value="Genomic_DNA"/>
</dbReference>
<dbReference type="SMR" id="Q72SI0"/>
<dbReference type="KEGG" id="lic:LIC_11402"/>
<dbReference type="HOGENOM" id="CLU_013350_3_2_12"/>
<dbReference type="Proteomes" id="UP000007037">
    <property type="component" value="Chromosome I"/>
</dbReference>
<dbReference type="GO" id="GO:0005886">
    <property type="term" value="C:plasma membrane"/>
    <property type="evidence" value="ECO:0007669"/>
    <property type="project" value="UniProtKB-SubCell"/>
</dbReference>
<dbReference type="GO" id="GO:0015093">
    <property type="term" value="F:ferrous iron transmembrane transporter activity"/>
    <property type="evidence" value="ECO:0007669"/>
    <property type="project" value="InterPro"/>
</dbReference>
<dbReference type="GO" id="GO:0005525">
    <property type="term" value="F:GTP binding"/>
    <property type="evidence" value="ECO:0007669"/>
    <property type="project" value="UniProtKB-KW"/>
</dbReference>
<dbReference type="CDD" id="cd01879">
    <property type="entry name" value="FeoB"/>
    <property type="match status" value="1"/>
</dbReference>
<dbReference type="Gene3D" id="3.40.50.300">
    <property type="entry name" value="P-loop containing nucleotide triphosphate hydrolases"/>
    <property type="match status" value="1"/>
</dbReference>
<dbReference type="InterPro" id="IPR003373">
    <property type="entry name" value="Fe2_transport_prot-B"/>
</dbReference>
<dbReference type="InterPro" id="IPR011640">
    <property type="entry name" value="Fe2_transport_prot_B_C"/>
</dbReference>
<dbReference type="InterPro" id="IPR050860">
    <property type="entry name" value="FeoB_GTPase"/>
</dbReference>
<dbReference type="InterPro" id="IPR030389">
    <property type="entry name" value="G_FEOB_dom"/>
</dbReference>
<dbReference type="InterPro" id="IPR011642">
    <property type="entry name" value="Gate_dom"/>
</dbReference>
<dbReference type="InterPro" id="IPR006073">
    <property type="entry name" value="GTP-bd"/>
</dbReference>
<dbReference type="InterPro" id="IPR027417">
    <property type="entry name" value="P-loop_NTPase"/>
</dbReference>
<dbReference type="NCBIfam" id="TIGR00437">
    <property type="entry name" value="feoB"/>
    <property type="match status" value="1"/>
</dbReference>
<dbReference type="PANTHER" id="PTHR43185:SF1">
    <property type="entry name" value="FE(2+) TRANSPORTER FEOB"/>
    <property type="match status" value="1"/>
</dbReference>
<dbReference type="PANTHER" id="PTHR43185">
    <property type="entry name" value="FERROUS IRON TRANSPORT PROTEIN B"/>
    <property type="match status" value="1"/>
</dbReference>
<dbReference type="Pfam" id="PF07664">
    <property type="entry name" value="FeoB_C"/>
    <property type="match status" value="1"/>
</dbReference>
<dbReference type="Pfam" id="PF02421">
    <property type="entry name" value="FeoB_N"/>
    <property type="match status" value="1"/>
</dbReference>
<dbReference type="Pfam" id="PF07670">
    <property type="entry name" value="Gate"/>
    <property type="match status" value="2"/>
</dbReference>
<dbReference type="PRINTS" id="PR00326">
    <property type="entry name" value="GTP1OBG"/>
</dbReference>
<dbReference type="SUPFAM" id="SSF52540">
    <property type="entry name" value="P-loop containing nucleoside triphosphate hydrolases"/>
    <property type="match status" value="1"/>
</dbReference>
<dbReference type="PROSITE" id="PS51711">
    <property type="entry name" value="G_FEOB"/>
    <property type="match status" value="1"/>
</dbReference>
<keyword id="KW-0997">Cell inner membrane</keyword>
<keyword id="KW-1003">Cell membrane</keyword>
<keyword id="KW-0342">GTP-binding</keyword>
<keyword id="KW-0406">Ion transport</keyword>
<keyword id="KW-0408">Iron</keyword>
<keyword id="KW-0410">Iron transport</keyword>
<keyword id="KW-0472">Membrane</keyword>
<keyword id="KW-0547">Nucleotide-binding</keyword>
<keyword id="KW-0812">Transmembrane</keyword>
<keyword id="KW-1133">Transmembrane helix</keyword>
<keyword id="KW-0813">Transport</keyword>
<accession>Q72SI0</accession>